<organism>
    <name type="scientific">Saccharophagus degradans (strain 2-40 / ATCC 43961 / DSM 17024)</name>
    <dbReference type="NCBI Taxonomy" id="203122"/>
    <lineage>
        <taxon>Bacteria</taxon>
        <taxon>Pseudomonadati</taxon>
        <taxon>Pseudomonadota</taxon>
        <taxon>Gammaproteobacteria</taxon>
        <taxon>Cellvibrionales</taxon>
        <taxon>Cellvibrionaceae</taxon>
        <taxon>Saccharophagus</taxon>
    </lineage>
</organism>
<keyword id="KW-0963">Cytoplasm</keyword>
<keyword id="KW-0227">DNA damage</keyword>
<keyword id="KW-0233">DNA recombination</keyword>
<keyword id="KW-0234">DNA repair</keyword>
<keyword id="KW-0238">DNA-binding</keyword>
<keyword id="KW-1185">Reference proteome</keyword>
<evidence type="ECO:0000255" key="1">
    <source>
        <dbReference type="HAMAP-Rule" id="MF_00031"/>
    </source>
</evidence>
<name>RUVA_SACD2</name>
<dbReference type="EMBL" id="CP000282">
    <property type="protein sequence ID" value="ABD81794.1"/>
    <property type="molecule type" value="Genomic_DNA"/>
</dbReference>
<dbReference type="RefSeq" id="WP_011469011.1">
    <property type="nucleotide sequence ID" value="NC_007912.1"/>
</dbReference>
<dbReference type="SMR" id="Q21HN5"/>
<dbReference type="STRING" id="203122.Sde_2534"/>
<dbReference type="GeneID" id="98614194"/>
<dbReference type="KEGG" id="sde:Sde_2534"/>
<dbReference type="eggNOG" id="COG0632">
    <property type="taxonomic scope" value="Bacteria"/>
</dbReference>
<dbReference type="HOGENOM" id="CLU_087936_0_0_6"/>
<dbReference type="OrthoDB" id="5293449at2"/>
<dbReference type="Proteomes" id="UP000001947">
    <property type="component" value="Chromosome"/>
</dbReference>
<dbReference type="GO" id="GO:0005737">
    <property type="term" value="C:cytoplasm"/>
    <property type="evidence" value="ECO:0007669"/>
    <property type="project" value="UniProtKB-SubCell"/>
</dbReference>
<dbReference type="GO" id="GO:0009379">
    <property type="term" value="C:Holliday junction helicase complex"/>
    <property type="evidence" value="ECO:0007669"/>
    <property type="project" value="InterPro"/>
</dbReference>
<dbReference type="GO" id="GO:0048476">
    <property type="term" value="C:Holliday junction resolvase complex"/>
    <property type="evidence" value="ECO:0007669"/>
    <property type="project" value="UniProtKB-UniRule"/>
</dbReference>
<dbReference type="GO" id="GO:0005524">
    <property type="term" value="F:ATP binding"/>
    <property type="evidence" value="ECO:0007669"/>
    <property type="project" value="InterPro"/>
</dbReference>
<dbReference type="GO" id="GO:0000400">
    <property type="term" value="F:four-way junction DNA binding"/>
    <property type="evidence" value="ECO:0007669"/>
    <property type="project" value="UniProtKB-UniRule"/>
</dbReference>
<dbReference type="GO" id="GO:0009378">
    <property type="term" value="F:four-way junction helicase activity"/>
    <property type="evidence" value="ECO:0007669"/>
    <property type="project" value="InterPro"/>
</dbReference>
<dbReference type="GO" id="GO:0006310">
    <property type="term" value="P:DNA recombination"/>
    <property type="evidence" value="ECO:0007669"/>
    <property type="project" value="UniProtKB-UniRule"/>
</dbReference>
<dbReference type="GO" id="GO:0006281">
    <property type="term" value="P:DNA repair"/>
    <property type="evidence" value="ECO:0007669"/>
    <property type="project" value="UniProtKB-UniRule"/>
</dbReference>
<dbReference type="CDD" id="cd14332">
    <property type="entry name" value="UBA_RuvA_C"/>
    <property type="match status" value="1"/>
</dbReference>
<dbReference type="Gene3D" id="1.10.150.20">
    <property type="entry name" value="5' to 3' exonuclease, C-terminal subdomain"/>
    <property type="match status" value="1"/>
</dbReference>
<dbReference type="Gene3D" id="1.10.8.10">
    <property type="entry name" value="DNA helicase RuvA subunit, C-terminal domain"/>
    <property type="match status" value="1"/>
</dbReference>
<dbReference type="Gene3D" id="2.40.50.140">
    <property type="entry name" value="Nucleic acid-binding proteins"/>
    <property type="match status" value="1"/>
</dbReference>
<dbReference type="HAMAP" id="MF_00031">
    <property type="entry name" value="DNA_HJ_migration_RuvA"/>
    <property type="match status" value="1"/>
</dbReference>
<dbReference type="InterPro" id="IPR013849">
    <property type="entry name" value="DNA_helicase_Holl-junc_RuvA_I"/>
</dbReference>
<dbReference type="InterPro" id="IPR003583">
    <property type="entry name" value="Hlx-hairpin-Hlx_DNA-bd_motif"/>
</dbReference>
<dbReference type="InterPro" id="IPR012340">
    <property type="entry name" value="NA-bd_OB-fold"/>
</dbReference>
<dbReference type="InterPro" id="IPR000085">
    <property type="entry name" value="RuvA"/>
</dbReference>
<dbReference type="InterPro" id="IPR010994">
    <property type="entry name" value="RuvA_2-like"/>
</dbReference>
<dbReference type="InterPro" id="IPR011114">
    <property type="entry name" value="RuvA_C"/>
</dbReference>
<dbReference type="InterPro" id="IPR036267">
    <property type="entry name" value="RuvA_C_sf"/>
</dbReference>
<dbReference type="NCBIfam" id="TIGR00084">
    <property type="entry name" value="ruvA"/>
    <property type="match status" value="1"/>
</dbReference>
<dbReference type="Pfam" id="PF14520">
    <property type="entry name" value="HHH_5"/>
    <property type="match status" value="1"/>
</dbReference>
<dbReference type="Pfam" id="PF07499">
    <property type="entry name" value="RuvA_C"/>
    <property type="match status" value="1"/>
</dbReference>
<dbReference type="Pfam" id="PF01330">
    <property type="entry name" value="RuvA_N"/>
    <property type="match status" value="1"/>
</dbReference>
<dbReference type="SMART" id="SM00278">
    <property type="entry name" value="HhH1"/>
    <property type="match status" value="2"/>
</dbReference>
<dbReference type="SUPFAM" id="SSF46929">
    <property type="entry name" value="DNA helicase RuvA subunit, C-terminal domain"/>
    <property type="match status" value="1"/>
</dbReference>
<dbReference type="SUPFAM" id="SSF50249">
    <property type="entry name" value="Nucleic acid-binding proteins"/>
    <property type="match status" value="1"/>
</dbReference>
<dbReference type="SUPFAM" id="SSF47781">
    <property type="entry name" value="RuvA domain 2-like"/>
    <property type="match status" value="1"/>
</dbReference>
<sequence>MIGRLTGILAEKKAPHLLIDIGGVGYDVIAPMTTFYRLPALGEKAVLHTHFSVSETSQQLFGFSSQQDRELFRMLIKVNGVGPKLAVGIMSMESSDFAKCVLDGNLTALVKLPGVGKKTAERLLVDMRDRVKALDTTPSEHSPTGEGAGIVRVDPVINTNVIIADAESALIGLGYKPTEAAKAVSAAYNDTITTSEDLIRAALKGMI</sequence>
<gene>
    <name evidence="1" type="primary">ruvA</name>
    <name type="ordered locus">Sde_2534</name>
</gene>
<comment type="function">
    <text evidence="1">The RuvA-RuvB-RuvC complex processes Holliday junction (HJ) DNA during genetic recombination and DNA repair, while the RuvA-RuvB complex plays an important role in the rescue of blocked DNA replication forks via replication fork reversal (RFR). RuvA specifically binds to HJ cruciform DNA, conferring on it an open structure. The RuvB hexamer acts as an ATP-dependent pump, pulling dsDNA into and through the RuvAB complex. HJ branch migration allows RuvC to scan DNA until it finds its consensus sequence, where it cleaves and resolves the cruciform DNA.</text>
</comment>
<comment type="subunit">
    <text evidence="1">Homotetramer. Forms an RuvA(8)-RuvB(12)-Holliday junction (HJ) complex. HJ DNA is sandwiched between 2 RuvA tetramers; dsDNA enters through RuvA and exits via RuvB. An RuvB hexamer assembles on each DNA strand where it exits the tetramer. Each RuvB hexamer is contacted by two RuvA subunits (via domain III) on 2 adjacent RuvB subunits; this complex drives branch migration. In the full resolvosome a probable DNA-RuvA(4)-RuvB(12)-RuvC(2) complex forms which resolves the HJ.</text>
</comment>
<comment type="subcellular location">
    <subcellularLocation>
        <location evidence="1">Cytoplasm</location>
    </subcellularLocation>
</comment>
<comment type="domain">
    <text evidence="1">Has three domains with a flexible linker between the domains II and III and assumes an 'L' shape. Domain III is highly mobile and contacts RuvB.</text>
</comment>
<comment type="similarity">
    <text evidence="1">Belongs to the RuvA family.</text>
</comment>
<feature type="chain" id="PRO_1000002542" description="Holliday junction branch migration complex subunit RuvA">
    <location>
        <begin position="1"/>
        <end position="207"/>
    </location>
</feature>
<feature type="region of interest" description="Domain I" evidence="1">
    <location>
        <begin position="1"/>
        <end position="64"/>
    </location>
</feature>
<feature type="region of interest" description="Domain II" evidence="1">
    <location>
        <begin position="65"/>
        <end position="142"/>
    </location>
</feature>
<feature type="region of interest" description="Flexible linker" evidence="1">
    <location>
        <begin position="143"/>
        <end position="157"/>
    </location>
</feature>
<feature type="region of interest" description="Domain III" evidence="1">
    <location>
        <begin position="158"/>
        <end position="207"/>
    </location>
</feature>
<proteinExistence type="inferred from homology"/>
<reference key="1">
    <citation type="journal article" date="2008" name="PLoS Genet.">
        <title>Complete genome sequence of the complex carbohydrate-degrading marine bacterium, Saccharophagus degradans strain 2-40 T.</title>
        <authorList>
            <person name="Weiner R.M."/>
            <person name="Taylor L.E. II"/>
            <person name="Henrissat B."/>
            <person name="Hauser L."/>
            <person name="Land M."/>
            <person name="Coutinho P.M."/>
            <person name="Rancurel C."/>
            <person name="Saunders E.H."/>
            <person name="Longmire A.G."/>
            <person name="Zhang H."/>
            <person name="Bayer E.A."/>
            <person name="Gilbert H.J."/>
            <person name="Larimer F."/>
            <person name="Zhulin I.B."/>
            <person name="Ekborg N.A."/>
            <person name="Lamed R."/>
            <person name="Richardson P.M."/>
            <person name="Borovok I."/>
            <person name="Hutcheson S."/>
        </authorList>
    </citation>
    <scope>NUCLEOTIDE SEQUENCE [LARGE SCALE GENOMIC DNA]</scope>
    <source>
        <strain>2-40 / ATCC 43961 / DSM 17024</strain>
    </source>
</reference>
<protein>
    <recommendedName>
        <fullName evidence="1">Holliday junction branch migration complex subunit RuvA</fullName>
    </recommendedName>
</protein>
<accession>Q21HN5</accession>